<accession>P15457</accession>
<evidence type="ECO:0000269" key="1">
    <source>
    </source>
</evidence>
<evidence type="ECO:0000305" key="2"/>
<gene>
    <name type="primary">AT2S1</name>
    <name type="ordered locus">At4g27140</name>
    <name type="ORF">T24A18.90</name>
</gene>
<name>2SS1_ARATH</name>
<proteinExistence type="evidence at protein level"/>
<dbReference type="EMBL" id="AH001334">
    <property type="protein sequence ID" value="AAA32743.1"/>
    <property type="molecule type" value="Genomic_DNA"/>
</dbReference>
<dbReference type="EMBL" id="Z24745">
    <property type="protein sequence ID" value="CAA80870.1"/>
    <property type="molecule type" value="Genomic_DNA"/>
</dbReference>
<dbReference type="EMBL" id="AL035680">
    <property type="protein sequence ID" value="CAB38844.1"/>
    <property type="molecule type" value="Genomic_DNA"/>
</dbReference>
<dbReference type="EMBL" id="AL161566">
    <property type="protein sequence ID" value="CAB79569.1"/>
    <property type="molecule type" value="Genomic_DNA"/>
</dbReference>
<dbReference type="EMBL" id="CP002687">
    <property type="protein sequence ID" value="AEE85306.1"/>
    <property type="molecule type" value="Genomic_DNA"/>
</dbReference>
<dbReference type="EMBL" id="AF370541">
    <property type="protein sequence ID" value="AAK48968.1"/>
    <property type="molecule type" value="mRNA"/>
</dbReference>
<dbReference type="EMBL" id="AY072508">
    <property type="protein sequence ID" value="AAL66923.1"/>
    <property type="molecule type" value="mRNA"/>
</dbReference>
<dbReference type="PIR" id="JA0161">
    <property type="entry name" value="NWMU1"/>
</dbReference>
<dbReference type="RefSeq" id="NP_194444.1">
    <property type="nucleotide sequence ID" value="NM_118848.2"/>
</dbReference>
<dbReference type="SMR" id="P15457"/>
<dbReference type="BioGRID" id="14109">
    <property type="interactions" value="3"/>
</dbReference>
<dbReference type="FunCoup" id="P15457">
    <property type="interactions" value="85"/>
</dbReference>
<dbReference type="IntAct" id="P15457">
    <property type="interactions" value="3"/>
</dbReference>
<dbReference type="STRING" id="3702.P15457"/>
<dbReference type="PaxDb" id="3702-AT4G27140.1"/>
<dbReference type="ProteomicsDB" id="245172"/>
<dbReference type="EnsemblPlants" id="AT4G27140.1">
    <property type="protein sequence ID" value="AT4G27140.1"/>
    <property type="gene ID" value="AT4G27140"/>
</dbReference>
<dbReference type="GeneID" id="828822"/>
<dbReference type="Gramene" id="AT4G27140.1">
    <property type="protein sequence ID" value="AT4G27140.1"/>
    <property type="gene ID" value="AT4G27140"/>
</dbReference>
<dbReference type="KEGG" id="ath:AT4G27140"/>
<dbReference type="Araport" id="AT4G27140"/>
<dbReference type="TAIR" id="AT4G27140">
    <property type="gene designation" value="SESA1"/>
</dbReference>
<dbReference type="eggNOG" id="ENOG502S7EV">
    <property type="taxonomic scope" value="Eukaryota"/>
</dbReference>
<dbReference type="HOGENOM" id="CLU_131213_1_0_1"/>
<dbReference type="InParanoid" id="P15457"/>
<dbReference type="OMA" id="QPMQVRK"/>
<dbReference type="OrthoDB" id="1922883at2759"/>
<dbReference type="PhylomeDB" id="P15457"/>
<dbReference type="PRO" id="PR:P15457"/>
<dbReference type="Proteomes" id="UP000006548">
    <property type="component" value="Chromosome 4"/>
</dbReference>
<dbReference type="ExpressionAtlas" id="P15457">
    <property type="expression patterns" value="baseline and differential"/>
</dbReference>
<dbReference type="GO" id="GO:0045735">
    <property type="term" value="F:nutrient reservoir activity"/>
    <property type="evidence" value="ECO:0007669"/>
    <property type="project" value="UniProtKB-KW"/>
</dbReference>
<dbReference type="CDD" id="cd00261">
    <property type="entry name" value="AAI_SS"/>
    <property type="match status" value="1"/>
</dbReference>
<dbReference type="Gene3D" id="1.10.110.10">
    <property type="entry name" value="Plant lipid-transfer and hydrophobic proteins"/>
    <property type="match status" value="1"/>
</dbReference>
<dbReference type="InterPro" id="IPR036312">
    <property type="entry name" value="Bifun_inhib/LTP/seed_sf"/>
</dbReference>
<dbReference type="InterPro" id="IPR016140">
    <property type="entry name" value="Bifunc_inhib/LTP/seed_store"/>
</dbReference>
<dbReference type="InterPro" id="IPR000617">
    <property type="entry name" value="Napin/2SS/CON"/>
</dbReference>
<dbReference type="PANTHER" id="PTHR35496">
    <property type="entry name" value="2S SEED STORAGE PROTEIN 1-RELATED"/>
    <property type="match status" value="1"/>
</dbReference>
<dbReference type="PANTHER" id="PTHR35496:SF20">
    <property type="entry name" value="2S SEED STORAGE PROTEIN 1-RELATED"/>
    <property type="match status" value="1"/>
</dbReference>
<dbReference type="Pfam" id="PF00234">
    <property type="entry name" value="Tryp_alpha_amyl"/>
    <property type="match status" value="1"/>
</dbReference>
<dbReference type="PRINTS" id="PR00496">
    <property type="entry name" value="NAPIN"/>
</dbReference>
<dbReference type="SMART" id="SM00499">
    <property type="entry name" value="AAI"/>
    <property type="match status" value="1"/>
</dbReference>
<dbReference type="SUPFAM" id="SSF47699">
    <property type="entry name" value="Bifunctional inhibitor/lipid-transfer protein/seed storage 2S albumin"/>
    <property type="match status" value="1"/>
</dbReference>
<keyword id="KW-0903">Direct protein sequencing</keyword>
<keyword id="KW-1015">Disulfide bond</keyword>
<keyword id="KW-1185">Reference proteome</keyword>
<keyword id="KW-0708">Seed storage protein</keyword>
<keyword id="KW-0732">Signal</keyword>
<keyword id="KW-0758">Storage protein</keyword>
<organism>
    <name type="scientific">Arabidopsis thaliana</name>
    <name type="common">Mouse-ear cress</name>
    <dbReference type="NCBI Taxonomy" id="3702"/>
    <lineage>
        <taxon>Eukaryota</taxon>
        <taxon>Viridiplantae</taxon>
        <taxon>Streptophyta</taxon>
        <taxon>Embryophyta</taxon>
        <taxon>Tracheophyta</taxon>
        <taxon>Spermatophyta</taxon>
        <taxon>Magnoliopsida</taxon>
        <taxon>eudicotyledons</taxon>
        <taxon>Gunneridae</taxon>
        <taxon>Pentapetalae</taxon>
        <taxon>rosids</taxon>
        <taxon>malvids</taxon>
        <taxon>Brassicales</taxon>
        <taxon>Brassicaceae</taxon>
        <taxon>Camelineae</taxon>
        <taxon>Arabidopsis</taxon>
    </lineage>
</organism>
<protein>
    <recommendedName>
        <fullName>2S seed storage protein 1</fullName>
    </recommendedName>
    <alternativeName>
        <fullName>2S albumin storage protein</fullName>
    </alternativeName>
    <alternativeName>
        <fullName>NWMU2-2S albumin 1</fullName>
    </alternativeName>
    <component>
        <recommendedName>
            <fullName>2S seed storage protein 1 small subunit</fullName>
        </recommendedName>
    </component>
    <component>
        <recommendedName>
            <fullName>2S seed storage protein 1 large subunit</fullName>
        </recommendedName>
    </component>
</protein>
<feature type="signal peptide">
    <location>
        <begin position="1"/>
        <end position="21"/>
    </location>
</feature>
<feature type="propeptide" id="PRO_0000032088" evidence="1">
    <location>
        <begin position="22"/>
        <end position="37"/>
    </location>
</feature>
<feature type="chain" id="PRO_0000032089" description="2S seed storage protein 1 small subunit">
    <location>
        <begin position="38"/>
        <end position="73"/>
    </location>
</feature>
<feature type="propeptide" id="PRO_0000032090" evidence="1">
    <location>
        <begin position="74"/>
        <end position="83"/>
    </location>
</feature>
<feature type="chain" id="PRO_0000032091" description="2S seed storage protein 1 large subunit">
    <location>
        <begin position="84"/>
        <end position="162"/>
    </location>
</feature>
<feature type="propeptide" id="PRO_0000032092">
    <location>
        <begin position="163"/>
        <end position="164"/>
    </location>
</feature>
<reference key="1">
    <citation type="journal article" date="1988" name="Plant Physiol.">
        <title>Determination of the processing sites of an Arabidopsis 2S albumin and characterization of the complete gene family.</title>
        <authorList>
            <person name="Krebbers E."/>
            <person name="Herdies L."/>
            <person name="de Clercq A."/>
            <person name="Seurinck J."/>
            <person name="Leemans J."/>
            <person name="van Damme J."/>
            <person name="Segura M."/>
            <person name="Gheysen G."/>
            <person name="van Montagu M."/>
            <person name="Vandekerckhove J."/>
        </authorList>
    </citation>
    <scope>NUCLEOTIDE SEQUENCE [GENOMIC DNA]</scope>
    <scope>PROTEIN SEQUENCE OF 38-73 AND 84-162</scope>
    <source>
        <strain>cv. C24</strain>
    </source>
</reference>
<reference key="2">
    <citation type="journal article" date="1994" name="Plant J.">
        <title>A cotyledon regulatory region is responsible for the different spatial expression patterns of Arabidopsis 2S albumin genes.</title>
        <authorList>
            <person name="da Silva Conceicao A."/>
            <person name="Krebbers E."/>
        </authorList>
    </citation>
    <scope>NUCLEOTIDE SEQUENCE [GENOMIC DNA]</scope>
    <source>
        <strain>cv. C24</strain>
    </source>
</reference>
<reference key="3">
    <citation type="journal article" date="1999" name="Nature">
        <title>Sequence and analysis of chromosome 4 of the plant Arabidopsis thaliana.</title>
        <authorList>
            <person name="Mayer K.F.X."/>
            <person name="Schueller C."/>
            <person name="Wambutt R."/>
            <person name="Murphy G."/>
            <person name="Volckaert G."/>
            <person name="Pohl T."/>
            <person name="Duesterhoeft A."/>
            <person name="Stiekema W."/>
            <person name="Entian K.-D."/>
            <person name="Terryn N."/>
            <person name="Harris B."/>
            <person name="Ansorge W."/>
            <person name="Brandt P."/>
            <person name="Grivell L.A."/>
            <person name="Rieger M."/>
            <person name="Weichselgartner M."/>
            <person name="de Simone V."/>
            <person name="Obermaier B."/>
            <person name="Mache R."/>
            <person name="Mueller M."/>
            <person name="Kreis M."/>
            <person name="Delseny M."/>
            <person name="Puigdomenech P."/>
            <person name="Watson M."/>
            <person name="Schmidtheini T."/>
            <person name="Reichert B."/>
            <person name="Portetelle D."/>
            <person name="Perez-Alonso M."/>
            <person name="Boutry M."/>
            <person name="Bancroft I."/>
            <person name="Vos P."/>
            <person name="Hoheisel J."/>
            <person name="Zimmermann W."/>
            <person name="Wedler H."/>
            <person name="Ridley P."/>
            <person name="Langham S.-A."/>
            <person name="McCullagh B."/>
            <person name="Bilham L."/>
            <person name="Robben J."/>
            <person name="van der Schueren J."/>
            <person name="Grymonprez B."/>
            <person name="Chuang Y.-J."/>
            <person name="Vandenbussche F."/>
            <person name="Braeken M."/>
            <person name="Weltjens I."/>
            <person name="Voet M."/>
            <person name="Bastiaens I."/>
            <person name="Aert R."/>
            <person name="Defoor E."/>
            <person name="Weitzenegger T."/>
            <person name="Bothe G."/>
            <person name="Ramsperger U."/>
            <person name="Hilbert H."/>
            <person name="Braun M."/>
            <person name="Holzer E."/>
            <person name="Brandt A."/>
            <person name="Peters S."/>
            <person name="van Staveren M."/>
            <person name="Dirkse W."/>
            <person name="Mooijman P."/>
            <person name="Klein Lankhorst R."/>
            <person name="Rose M."/>
            <person name="Hauf J."/>
            <person name="Koetter P."/>
            <person name="Berneiser S."/>
            <person name="Hempel S."/>
            <person name="Feldpausch M."/>
            <person name="Lamberth S."/>
            <person name="Van den Daele H."/>
            <person name="De Keyser A."/>
            <person name="Buysshaert C."/>
            <person name="Gielen J."/>
            <person name="Villarroel R."/>
            <person name="De Clercq R."/>
            <person name="van Montagu M."/>
            <person name="Rogers J."/>
            <person name="Cronin A."/>
            <person name="Quail M.A."/>
            <person name="Bray-Allen S."/>
            <person name="Clark L."/>
            <person name="Doggett J."/>
            <person name="Hall S."/>
            <person name="Kay M."/>
            <person name="Lennard N."/>
            <person name="McLay K."/>
            <person name="Mayes R."/>
            <person name="Pettett A."/>
            <person name="Rajandream M.A."/>
            <person name="Lyne M."/>
            <person name="Benes V."/>
            <person name="Rechmann S."/>
            <person name="Borkova D."/>
            <person name="Bloecker H."/>
            <person name="Scharfe M."/>
            <person name="Grimm M."/>
            <person name="Loehnert T.-H."/>
            <person name="Dose S."/>
            <person name="de Haan M."/>
            <person name="Maarse A.C."/>
            <person name="Schaefer M."/>
            <person name="Mueller-Auer S."/>
            <person name="Gabel C."/>
            <person name="Fuchs M."/>
            <person name="Fartmann B."/>
            <person name="Granderath K."/>
            <person name="Dauner D."/>
            <person name="Herzl A."/>
            <person name="Neumann S."/>
            <person name="Argiriou A."/>
            <person name="Vitale D."/>
            <person name="Liguori R."/>
            <person name="Piravandi E."/>
            <person name="Massenet O."/>
            <person name="Quigley F."/>
            <person name="Clabauld G."/>
            <person name="Muendlein A."/>
            <person name="Felber R."/>
            <person name="Schnabl S."/>
            <person name="Hiller R."/>
            <person name="Schmidt W."/>
            <person name="Lecharny A."/>
            <person name="Aubourg S."/>
            <person name="Chefdor F."/>
            <person name="Cooke R."/>
            <person name="Berger C."/>
            <person name="Monfort A."/>
            <person name="Casacuberta E."/>
            <person name="Gibbons T."/>
            <person name="Weber N."/>
            <person name="Vandenbol M."/>
            <person name="Bargues M."/>
            <person name="Terol J."/>
            <person name="Torres A."/>
            <person name="Perez-Perez A."/>
            <person name="Purnelle B."/>
            <person name="Bent E."/>
            <person name="Johnson S."/>
            <person name="Tacon D."/>
            <person name="Jesse T."/>
            <person name="Heijnen L."/>
            <person name="Schwarz S."/>
            <person name="Scholler P."/>
            <person name="Heber S."/>
            <person name="Francs P."/>
            <person name="Bielke C."/>
            <person name="Frishman D."/>
            <person name="Haase D."/>
            <person name="Lemcke K."/>
            <person name="Mewes H.-W."/>
            <person name="Stocker S."/>
            <person name="Zaccaria P."/>
            <person name="Bevan M."/>
            <person name="Wilson R.K."/>
            <person name="de la Bastide M."/>
            <person name="Habermann K."/>
            <person name="Parnell L."/>
            <person name="Dedhia N."/>
            <person name="Gnoj L."/>
            <person name="Schutz K."/>
            <person name="Huang E."/>
            <person name="Spiegel L."/>
            <person name="Sekhon M."/>
            <person name="Murray J."/>
            <person name="Sheet P."/>
            <person name="Cordes M."/>
            <person name="Abu-Threideh J."/>
            <person name="Stoneking T."/>
            <person name="Kalicki J."/>
            <person name="Graves T."/>
            <person name="Harmon G."/>
            <person name="Edwards J."/>
            <person name="Latreille P."/>
            <person name="Courtney L."/>
            <person name="Cloud J."/>
            <person name="Abbott A."/>
            <person name="Scott K."/>
            <person name="Johnson D."/>
            <person name="Minx P."/>
            <person name="Bentley D."/>
            <person name="Fulton B."/>
            <person name="Miller N."/>
            <person name="Greco T."/>
            <person name="Kemp K."/>
            <person name="Kramer J."/>
            <person name="Fulton L."/>
            <person name="Mardis E."/>
            <person name="Dante M."/>
            <person name="Pepin K."/>
            <person name="Hillier L.W."/>
            <person name="Nelson J."/>
            <person name="Spieth J."/>
            <person name="Ryan E."/>
            <person name="Andrews S."/>
            <person name="Geisel C."/>
            <person name="Layman D."/>
            <person name="Du H."/>
            <person name="Ali J."/>
            <person name="Berghoff A."/>
            <person name="Jones K."/>
            <person name="Drone K."/>
            <person name="Cotton M."/>
            <person name="Joshu C."/>
            <person name="Antonoiu B."/>
            <person name="Zidanic M."/>
            <person name="Strong C."/>
            <person name="Sun H."/>
            <person name="Lamar B."/>
            <person name="Yordan C."/>
            <person name="Ma P."/>
            <person name="Zhong J."/>
            <person name="Preston R."/>
            <person name="Vil D."/>
            <person name="Shekher M."/>
            <person name="Matero A."/>
            <person name="Shah R."/>
            <person name="Swaby I.K."/>
            <person name="O'Shaughnessy A."/>
            <person name="Rodriguez M."/>
            <person name="Hoffman J."/>
            <person name="Till S."/>
            <person name="Granat S."/>
            <person name="Shohdy N."/>
            <person name="Hasegawa A."/>
            <person name="Hameed A."/>
            <person name="Lodhi M."/>
            <person name="Johnson A."/>
            <person name="Chen E."/>
            <person name="Marra M.A."/>
            <person name="Martienssen R."/>
            <person name="McCombie W.R."/>
        </authorList>
    </citation>
    <scope>NUCLEOTIDE SEQUENCE [LARGE SCALE GENOMIC DNA]</scope>
    <source>
        <strain>cv. Columbia</strain>
    </source>
</reference>
<reference key="4">
    <citation type="journal article" date="2017" name="Plant J.">
        <title>Araport11: a complete reannotation of the Arabidopsis thaliana reference genome.</title>
        <authorList>
            <person name="Cheng C.Y."/>
            <person name="Krishnakumar V."/>
            <person name="Chan A.P."/>
            <person name="Thibaud-Nissen F."/>
            <person name="Schobel S."/>
            <person name="Town C.D."/>
        </authorList>
    </citation>
    <scope>GENOME REANNOTATION</scope>
    <source>
        <strain>cv. Columbia</strain>
    </source>
</reference>
<reference key="5">
    <citation type="journal article" date="2003" name="Science">
        <title>Empirical analysis of transcriptional activity in the Arabidopsis genome.</title>
        <authorList>
            <person name="Yamada K."/>
            <person name="Lim J."/>
            <person name="Dale J.M."/>
            <person name="Chen H."/>
            <person name="Shinn P."/>
            <person name="Palm C.J."/>
            <person name="Southwick A.M."/>
            <person name="Wu H.C."/>
            <person name="Kim C.J."/>
            <person name="Nguyen M."/>
            <person name="Pham P.K."/>
            <person name="Cheuk R.F."/>
            <person name="Karlin-Newmann G."/>
            <person name="Liu S.X."/>
            <person name="Lam B."/>
            <person name="Sakano H."/>
            <person name="Wu T."/>
            <person name="Yu G."/>
            <person name="Miranda M."/>
            <person name="Quach H.L."/>
            <person name="Tripp M."/>
            <person name="Chang C.H."/>
            <person name="Lee J.M."/>
            <person name="Toriumi M.J."/>
            <person name="Chan M.M."/>
            <person name="Tang C.C."/>
            <person name="Onodera C.S."/>
            <person name="Deng J.M."/>
            <person name="Akiyama K."/>
            <person name="Ansari Y."/>
            <person name="Arakawa T."/>
            <person name="Banh J."/>
            <person name="Banno F."/>
            <person name="Bowser L."/>
            <person name="Brooks S.Y."/>
            <person name="Carninci P."/>
            <person name="Chao Q."/>
            <person name="Choy N."/>
            <person name="Enju A."/>
            <person name="Goldsmith A.D."/>
            <person name="Gurjal M."/>
            <person name="Hansen N.F."/>
            <person name="Hayashizaki Y."/>
            <person name="Johnson-Hopson C."/>
            <person name="Hsuan V.W."/>
            <person name="Iida K."/>
            <person name="Karnes M."/>
            <person name="Khan S."/>
            <person name="Koesema E."/>
            <person name="Ishida J."/>
            <person name="Jiang P.X."/>
            <person name="Jones T."/>
            <person name="Kawai J."/>
            <person name="Kamiya A."/>
            <person name="Meyers C."/>
            <person name="Nakajima M."/>
            <person name="Narusaka M."/>
            <person name="Seki M."/>
            <person name="Sakurai T."/>
            <person name="Satou M."/>
            <person name="Tamse R."/>
            <person name="Vaysberg M."/>
            <person name="Wallender E.K."/>
            <person name="Wong C."/>
            <person name="Yamamura Y."/>
            <person name="Yuan S."/>
            <person name="Shinozaki K."/>
            <person name="Davis R.W."/>
            <person name="Theologis A."/>
            <person name="Ecker J.R."/>
        </authorList>
    </citation>
    <scope>NUCLEOTIDE SEQUENCE [LARGE SCALE MRNA]</scope>
    <source>
        <strain>cv. Columbia</strain>
    </source>
</reference>
<comment type="function">
    <text>This is a 2S seed storage protein.</text>
</comment>
<comment type="subunit">
    <text>The mature protein consists of a small and a large chain linked by disulfide bonds.</text>
</comment>
<comment type="miscellaneous">
    <text>This is the most abundant isoform of 2S albumin in Arabidopsis.</text>
</comment>
<comment type="similarity">
    <text evidence="2">Belongs to the 2S seed storage albumins family.</text>
</comment>
<sequence length="164" mass="19014">MANKLFLVCAALALCFLLTNASIYRTVVEFEEDDATNPIGPKMRKCRKEFQKEQHLRACQQLMLQQARQGRSDEFDFEDDMENPQGQQQEQQLFQQCCNELRQEEPDCVCPTLKQAAKAVRLQGQHQPMQVRKIYQTAKHLPNVCDIPQVDVCPFNIPSFPSFY</sequence>